<sequence length="830" mass="94515">MDNATKFHHPYSPYDIQLDLMQCVYDTLANPVKKVAIVESPTGTGKTLSLICSTLTWLRDNKADILSSVDTLHSNEDDSHDSEPEWVKDTYKESILKDKLELLDEYEKYLEELHLKENKIIKFGTSIEDKSKVKRRKVTSSSKAKIEVSIEDEDEFVAKPYESDGEETTDLEKKEALSKEVQELLAKFDSSKKNTDNVELGRFASASQNQVRIFFSSRTHSQLNQFAEQLKLTNFPSSFPDKVAHERVKYMPLGSKKQLCINPDVKKWKTLEGINDACSEVRRSKEGCPFYQNTPKWHNSKETNHFRDQVFSDIHDIEDIAKVGESLAVCPYYAARDFIPSSEIVTLPYQYLLSESTRSQLRLDLKGSIVVIDEAHNLVDTINSIHSAEISLSELKQSYNSIILYMKKFKSRLNPGNRVNLLKLSKLITVLINFITTHYKKPGLEVDAFSILESNNTDMLNVHRVLKYIKTSHIAYKLDTYIQKLQEKESPSNQKPSSQPLLYKISKFLECLNNTSSEGSFFFERGPSLRYMLLEPSRIFQDIIDSARCVILAGGTMEPVSQLLQYLVPKLDDSSITKFSCNHVIPDSHLRTYIVNEPQFEFTFEKRNSVNLVQNHLFNFYLELSTTIPKTGGIIGFFPSYKYLDEIIVSWRKAGLFEKLDKERKVFYEMKDGPDPLPDYTSAVANSEGAILFAIVGGKLSEGINFGGNLCRAIVMTGLPYPNVFSGELIISRKHLEEKVLNGGGSKTDANMAAKEFFENICMKAVNQSVGRSIRSINDYSLIYLLDKRYANANIQSKLSQWVRSRIQSVSTVRDVMASSKEFFDQIADT</sequence>
<dbReference type="EC" id="5.6.2.3" evidence="3"/>
<dbReference type="EMBL" id="CR380958">
    <property type="protein sequence ID" value="CAG62130.1"/>
    <property type="molecule type" value="Genomic_DNA"/>
</dbReference>
<dbReference type="RefSeq" id="XP_449160.1">
    <property type="nucleotide sequence ID" value="XM_449160.1"/>
</dbReference>
<dbReference type="SMR" id="Q6FKT4"/>
<dbReference type="FunCoup" id="Q6FKT4">
    <property type="interactions" value="1044"/>
</dbReference>
<dbReference type="STRING" id="284593.Q6FKT4"/>
<dbReference type="EnsemblFungi" id="CAGL0L08844g-T">
    <property type="protein sequence ID" value="CAGL0L08844g-T-p1"/>
    <property type="gene ID" value="CAGL0L08844g"/>
</dbReference>
<dbReference type="KEGG" id="cgr:2891091"/>
<dbReference type="CGD" id="CAL0136034">
    <property type="gene designation" value="CAGL0L08844g"/>
</dbReference>
<dbReference type="VEuPathDB" id="FungiDB:CAGL0L08844g"/>
<dbReference type="eggNOG" id="KOG1133">
    <property type="taxonomic scope" value="Eukaryota"/>
</dbReference>
<dbReference type="HOGENOM" id="CLU_006515_2_0_1"/>
<dbReference type="InParanoid" id="Q6FKT4"/>
<dbReference type="OMA" id="QTHQFRD"/>
<dbReference type="Proteomes" id="UP000002428">
    <property type="component" value="Chromosome L"/>
</dbReference>
<dbReference type="GO" id="GO:0000785">
    <property type="term" value="C:chromatin"/>
    <property type="evidence" value="ECO:0007669"/>
    <property type="project" value="EnsemblFungi"/>
</dbReference>
<dbReference type="GO" id="GO:0005634">
    <property type="term" value="C:nucleus"/>
    <property type="evidence" value="ECO:0007669"/>
    <property type="project" value="UniProtKB-SubCell"/>
</dbReference>
<dbReference type="GO" id="GO:0005524">
    <property type="term" value="F:ATP binding"/>
    <property type="evidence" value="ECO:0007669"/>
    <property type="project" value="UniProtKB-KW"/>
</dbReference>
<dbReference type="GO" id="GO:0016887">
    <property type="term" value="F:ATP hydrolysis activity"/>
    <property type="evidence" value="ECO:0007669"/>
    <property type="project" value="RHEA"/>
</dbReference>
<dbReference type="GO" id="GO:0003677">
    <property type="term" value="F:DNA binding"/>
    <property type="evidence" value="ECO:0007669"/>
    <property type="project" value="UniProtKB-KW"/>
</dbReference>
<dbReference type="GO" id="GO:0003678">
    <property type="term" value="F:DNA helicase activity"/>
    <property type="evidence" value="ECO:0007669"/>
    <property type="project" value="EnsemblFungi"/>
</dbReference>
<dbReference type="GO" id="GO:0051536">
    <property type="term" value="F:iron-sulfur cluster binding"/>
    <property type="evidence" value="ECO:0007669"/>
    <property type="project" value="UniProtKB-KW"/>
</dbReference>
<dbReference type="GO" id="GO:0046872">
    <property type="term" value="F:metal ion binding"/>
    <property type="evidence" value="ECO:0007669"/>
    <property type="project" value="UniProtKB-KW"/>
</dbReference>
<dbReference type="GO" id="GO:0034085">
    <property type="term" value="P:establishment of sister chromatid cohesion"/>
    <property type="evidence" value="ECO:0007669"/>
    <property type="project" value="EnsemblFungi"/>
</dbReference>
<dbReference type="GO" id="GO:0036297">
    <property type="term" value="P:interstrand cross-link repair"/>
    <property type="evidence" value="ECO:0007669"/>
    <property type="project" value="EnsemblFungi"/>
</dbReference>
<dbReference type="GO" id="GO:0031571">
    <property type="term" value="P:mitotic G1 DNA damage checkpoint signaling"/>
    <property type="evidence" value="ECO:0007669"/>
    <property type="project" value="EnsemblFungi"/>
</dbReference>
<dbReference type="GO" id="GO:0007064">
    <property type="term" value="P:mitotic sister chromatid cohesion"/>
    <property type="evidence" value="ECO:0007669"/>
    <property type="project" value="EnsemblFungi"/>
</dbReference>
<dbReference type="FunFam" id="3.40.50.300:FF:001968">
    <property type="entry name" value="ATP-dependent DNA helicase CHL1"/>
    <property type="match status" value="1"/>
</dbReference>
<dbReference type="Gene3D" id="3.40.50.300">
    <property type="entry name" value="P-loop containing nucleotide triphosphate hydrolases"/>
    <property type="match status" value="3"/>
</dbReference>
<dbReference type="InterPro" id="IPR006555">
    <property type="entry name" value="ATP-dep_Helicase_C"/>
</dbReference>
<dbReference type="InterPro" id="IPR045028">
    <property type="entry name" value="DinG/Rad3-like"/>
</dbReference>
<dbReference type="InterPro" id="IPR014013">
    <property type="entry name" value="Helic_SF1/SF2_ATP-bd_DinG/Rad3"/>
</dbReference>
<dbReference type="InterPro" id="IPR006554">
    <property type="entry name" value="Helicase-like_DEXD_c2"/>
</dbReference>
<dbReference type="InterPro" id="IPR027417">
    <property type="entry name" value="P-loop_NTPase"/>
</dbReference>
<dbReference type="InterPro" id="IPR010614">
    <property type="entry name" value="RAD3-like_helicase_DEAD"/>
</dbReference>
<dbReference type="InterPro" id="IPR013020">
    <property type="entry name" value="Rad3/Chl1-like"/>
</dbReference>
<dbReference type="NCBIfam" id="TIGR00604">
    <property type="entry name" value="rad3"/>
    <property type="match status" value="1"/>
</dbReference>
<dbReference type="PANTHER" id="PTHR11472:SF41">
    <property type="entry name" value="ATP-DEPENDENT DNA HELICASE DDX11-RELATED"/>
    <property type="match status" value="1"/>
</dbReference>
<dbReference type="PANTHER" id="PTHR11472">
    <property type="entry name" value="DNA REPAIR DEAD HELICASE RAD3/XP-D SUBFAMILY MEMBER"/>
    <property type="match status" value="1"/>
</dbReference>
<dbReference type="Pfam" id="PF06733">
    <property type="entry name" value="DEAD_2"/>
    <property type="match status" value="1"/>
</dbReference>
<dbReference type="Pfam" id="PF13307">
    <property type="entry name" value="Helicase_C_2"/>
    <property type="match status" value="1"/>
</dbReference>
<dbReference type="SMART" id="SM00488">
    <property type="entry name" value="DEXDc2"/>
    <property type="match status" value="1"/>
</dbReference>
<dbReference type="SMART" id="SM00491">
    <property type="entry name" value="HELICc2"/>
    <property type="match status" value="1"/>
</dbReference>
<dbReference type="SUPFAM" id="SSF52540">
    <property type="entry name" value="P-loop containing nucleoside triphosphate hydrolases"/>
    <property type="match status" value="1"/>
</dbReference>
<dbReference type="PROSITE" id="PS00690">
    <property type="entry name" value="DEAH_ATP_HELICASE"/>
    <property type="match status" value="1"/>
</dbReference>
<dbReference type="PROSITE" id="PS51193">
    <property type="entry name" value="HELICASE_ATP_BIND_2"/>
    <property type="match status" value="1"/>
</dbReference>
<evidence type="ECO:0000250" key="1">
    <source>
        <dbReference type="UniProtKB" id="P18074"/>
    </source>
</evidence>
<evidence type="ECO:0000250" key="2">
    <source>
        <dbReference type="UniProtKB" id="P22516"/>
    </source>
</evidence>
<evidence type="ECO:0000250" key="3">
    <source>
        <dbReference type="UniProtKB" id="Q96FC9"/>
    </source>
</evidence>
<evidence type="ECO:0000255" key="4">
    <source>
        <dbReference type="PROSITE-ProRule" id="PRU00541"/>
    </source>
</evidence>
<evidence type="ECO:0000305" key="5"/>
<protein>
    <recommendedName>
        <fullName evidence="2">ATP-dependent DNA helicase CHL1</fullName>
        <ecNumber evidence="3">5.6.2.3</ecNumber>
    </recommendedName>
    <alternativeName>
        <fullName evidence="2">Chromosome loss protein 1</fullName>
    </alternativeName>
    <alternativeName>
        <fullName evidence="5">DNA 5'-3' helicase CHL1</fullName>
    </alternativeName>
</protein>
<gene>
    <name type="primary">CHL1</name>
    <name type="ordered locus">CAGL0L08844g</name>
</gene>
<reference key="1">
    <citation type="journal article" date="2004" name="Nature">
        <title>Genome evolution in yeasts.</title>
        <authorList>
            <person name="Dujon B."/>
            <person name="Sherman D."/>
            <person name="Fischer G."/>
            <person name="Durrens P."/>
            <person name="Casaregola S."/>
            <person name="Lafontaine I."/>
            <person name="de Montigny J."/>
            <person name="Marck C."/>
            <person name="Neuveglise C."/>
            <person name="Talla E."/>
            <person name="Goffard N."/>
            <person name="Frangeul L."/>
            <person name="Aigle M."/>
            <person name="Anthouard V."/>
            <person name="Babour A."/>
            <person name="Barbe V."/>
            <person name="Barnay S."/>
            <person name="Blanchin S."/>
            <person name="Beckerich J.-M."/>
            <person name="Beyne E."/>
            <person name="Bleykasten C."/>
            <person name="Boisrame A."/>
            <person name="Boyer J."/>
            <person name="Cattolico L."/>
            <person name="Confanioleri F."/>
            <person name="de Daruvar A."/>
            <person name="Despons L."/>
            <person name="Fabre E."/>
            <person name="Fairhead C."/>
            <person name="Ferry-Dumazet H."/>
            <person name="Groppi A."/>
            <person name="Hantraye F."/>
            <person name="Hennequin C."/>
            <person name="Jauniaux N."/>
            <person name="Joyet P."/>
            <person name="Kachouri R."/>
            <person name="Kerrest A."/>
            <person name="Koszul R."/>
            <person name="Lemaire M."/>
            <person name="Lesur I."/>
            <person name="Ma L."/>
            <person name="Muller H."/>
            <person name="Nicaud J.-M."/>
            <person name="Nikolski M."/>
            <person name="Oztas S."/>
            <person name="Ozier-Kalogeropoulos O."/>
            <person name="Pellenz S."/>
            <person name="Potier S."/>
            <person name="Richard G.-F."/>
            <person name="Straub M.-L."/>
            <person name="Suleau A."/>
            <person name="Swennen D."/>
            <person name="Tekaia F."/>
            <person name="Wesolowski-Louvel M."/>
            <person name="Westhof E."/>
            <person name="Wirth B."/>
            <person name="Zeniou-Meyer M."/>
            <person name="Zivanovic Y."/>
            <person name="Bolotin-Fukuhara M."/>
            <person name="Thierry A."/>
            <person name="Bouchier C."/>
            <person name="Caudron B."/>
            <person name="Scarpelli C."/>
            <person name="Gaillardin C."/>
            <person name="Weissenbach J."/>
            <person name="Wincker P."/>
            <person name="Souciet J.-L."/>
        </authorList>
    </citation>
    <scope>NUCLEOTIDE SEQUENCE [LARGE SCALE GENOMIC DNA]</scope>
    <source>
        <strain>ATCC 2001 / BCRC 20586 / JCM 3761 / NBRC 0622 / NRRL Y-65 / CBS 138</strain>
    </source>
</reference>
<proteinExistence type="inferred from homology"/>
<comment type="function">
    <text evidence="2">ATP-dependent DNA helicase important for chromosome transmission and normal cell cycle progression in G(2)/M (By similarity). May have a role in changing DNA topology to allow the loading of proteins involved in maintaining sister chromatid cohesion in the vicinity of the centromeres (By similarity). Has a specific role in chromosome segregation during meiosis II (By similarity).</text>
</comment>
<comment type="catalytic activity">
    <reaction evidence="3">
        <text>Couples ATP hydrolysis with the unwinding of duplex DNA at the replication fork by translocating in the 5'-3' direction. This creates two antiparallel DNA single strands (ssDNA). The leading ssDNA polymer is the template for DNA polymerase III holoenzyme which synthesizes a continuous strand.</text>
        <dbReference type="EC" id="5.6.2.3"/>
    </reaction>
</comment>
<comment type="catalytic activity">
    <reaction evidence="3">
        <text>ATP + H2O = ADP + phosphate + H(+)</text>
        <dbReference type="Rhea" id="RHEA:13065"/>
        <dbReference type="ChEBI" id="CHEBI:15377"/>
        <dbReference type="ChEBI" id="CHEBI:15378"/>
        <dbReference type="ChEBI" id="CHEBI:30616"/>
        <dbReference type="ChEBI" id="CHEBI:43474"/>
        <dbReference type="ChEBI" id="CHEBI:456216"/>
        <dbReference type="EC" id="5.6.2.3"/>
    </reaction>
</comment>
<comment type="cofactor">
    <cofactor evidence="1">
        <name>[4Fe-4S] cluster</name>
        <dbReference type="ChEBI" id="CHEBI:49883"/>
    </cofactor>
    <text evidence="1">Binds 1 [4Fe-4S] cluster.</text>
</comment>
<comment type="subcellular location">
    <subcellularLocation>
        <location evidence="2">Nucleus</location>
    </subcellularLocation>
</comment>
<comment type="similarity">
    <text evidence="5">Belongs to the DEAD box helicase family. DEAH subfamily. DDX11/CHL1 sub-subfamily.</text>
</comment>
<keyword id="KW-0067">ATP-binding</keyword>
<keyword id="KW-0131">Cell cycle</keyword>
<keyword id="KW-0238">DNA-binding</keyword>
<keyword id="KW-0347">Helicase</keyword>
<keyword id="KW-0378">Hydrolase</keyword>
<keyword id="KW-0408">Iron</keyword>
<keyword id="KW-0411">Iron-sulfur</keyword>
<keyword id="KW-0413">Isomerase</keyword>
<keyword id="KW-0479">Metal-binding</keyword>
<keyword id="KW-0547">Nucleotide-binding</keyword>
<keyword id="KW-0539">Nucleus</keyword>
<keyword id="KW-1185">Reference proteome</keyword>
<accession>Q6FKT4</accession>
<name>CHL1_CANGA</name>
<feature type="chain" id="PRO_0000351007" description="ATP-dependent DNA helicase CHL1">
    <location>
        <begin position="1"/>
        <end position="830"/>
    </location>
</feature>
<feature type="domain" description="Helicase ATP-binding" evidence="4">
    <location>
        <begin position="3"/>
        <end position="438"/>
    </location>
</feature>
<feature type="short sequence motif" description="DEAH box">
    <location>
        <begin position="373"/>
        <end position="376"/>
    </location>
</feature>
<feature type="binding site" evidence="4">
    <location>
        <begin position="40"/>
        <end position="47"/>
    </location>
    <ligand>
        <name>ATP</name>
        <dbReference type="ChEBI" id="CHEBI:30616"/>
    </ligand>
</feature>
<feature type="binding site" evidence="1">
    <location>
        <position position="260"/>
    </location>
    <ligand>
        <name>[4Fe-4S] cluster</name>
        <dbReference type="ChEBI" id="CHEBI:49883"/>
    </ligand>
</feature>
<feature type="binding site" evidence="1">
    <location>
        <position position="278"/>
    </location>
    <ligand>
        <name>[4Fe-4S] cluster</name>
        <dbReference type="ChEBI" id="CHEBI:49883"/>
    </ligand>
</feature>
<feature type="binding site" evidence="1">
    <location>
        <position position="288"/>
    </location>
    <ligand>
        <name>[4Fe-4S] cluster</name>
        <dbReference type="ChEBI" id="CHEBI:49883"/>
    </ligand>
</feature>
<feature type="binding site" evidence="1">
    <location>
        <position position="330"/>
    </location>
    <ligand>
        <name>[4Fe-4S] cluster</name>
        <dbReference type="ChEBI" id="CHEBI:49883"/>
    </ligand>
</feature>
<organism>
    <name type="scientific">Candida glabrata (strain ATCC 2001 / BCRC 20586 / JCM 3761 / NBRC 0622 / NRRL Y-65 / CBS 138)</name>
    <name type="common">Yeast</name>
    <name type="synonym">Nakaseomyces glabratus</name>
    <dbReference type="NCBI Taxonomy" id="284593"/>
    <lineage>
        <taxon>Eukaryota</taxon>
        <taxon>Fungi</taxon>
        <taxon>Dikarya</taxon>
        <taxon>Ascomycota</taxon>
        <taxon>Saccharomycotina</taxon>
        <taxon>Saccharomycetes</taxon>
        <taxon>Saccharomycetales</taxon>
        <taxon>Saccharomycetaceae</taxon>
        <taxon>Nakaseomyces</taxon>
    </lineage>
</organism>